<evidence type="ECO:0000250" key="1"/>
<evidence type="ECO:0000250" key="2">
    <source>
        <dbReference type="UniProtKB" id="P03347"/>
    </source>
</evidence>
<evidence type="ECO:0000250" key="3">
    <source>
        <dbReference type="UniProtKB" id="P03366"/>
    </source>
</evidence>
<evidence type="ECO:0000250" key="4">
    <source>
        <dbReference type="UniProtKB" id="P03367"/>
    </source>
</evidence>
<evidence type="ECO:0000250" key="5">
    <source>
        <dbReference type="UniProtKB" id="P04585"/>
    </source>
</evidence>
<evidence type="ECO:0000250" key="6">
    <source>
        <dbReference type="UniProtKB" id="P12493"/>
    </source>
</evidence>
<evidence type="ECO:0000250" key="7">
    <source>
        <dbReference type="UniProtKB" id="P12497"/>
    </source>
</evidence>
<evidence type="ECO:0000255" key="8"/>
<evidence type="ECO:0000255" key="9">
    <source>
        <dbReference type="PROSITE-ProRule" id="PRU00047"/>
    </source>
</evidence>
<evidence type="ECO:0000255" key="10">
    <source>
        <dbReference type="PROSITE-ProRule" id="PRU00275"/>
    </source>
</evidence>
<evidence type="ECO:0000255" key="11">
    <source>
        <dbReference type="PROSITE-ProRule" id="PRU00405"/>
    </source>
</evidence>
<evidence type="ECO:0000255" key="12">
    <source>
        <dbReference type="PROSITE-ProRule" id="PRU00408"/>
    </source>
</evidence>
<evidence type="ECO:0000255" key="13">
    <source>
        <dbReference type="PROSITE-ProRule" id="PRU00450"/>
    </source>
</evidence>
<evidence type="ECO:0000255" key="14">
    <source>
        <dbReference type="PROSITE-ProRule" id="PRU00457"/>
    </source>
</evidence>
<evidence type="ECO:0000255" key="15">
    <source>
        <dbReference type="PROSITE-ProRule" id="PRU00506"/>
    </source>
</evidence>
<evidence type="ECO:0000255" key="16">
    <source>
        <dbReference type="PROSITE-ProRule" id="PRU10094"/>
    </source>
</evidence>
<evidence type="ECO:0000256" key="17">
    <source>
        <dbReference type="SAM" id="MobiDB-lite"/>
    </source>
</evidence>
<evidence type="ECO:0000305" key="18"/>
<evidence type="ECO:0007829" key="19">
    <source>
        <dbReference type="PDB" id="1VIJ"/>
    </source>
</evidence>
<evidence type="ECO:0007829" key="20">
    <source>
        <dbReference type="PDB" id="4EJD"/>
    </source>
</evidence>
<evidence type="ECO:0007829" key="21">
    <source>
        <dbReference type="PDB" id="4K4Q"/>
    </source>
</evidence>
<dbReference type="EC" id="3.4.23.16"/>
<dbReference type="EC" id="2.7.7.49"/>
<dbReference type="EC" id="2.7.7.7"/>
<dbReference type="EC" id="3.1.26.13"/>
<dbReference type="EC" id="3.1.13.2"/>
<dbReference type="EC" id="2.7.7.-" evidence="5"/>
<dbReference type="EC" id="3.1.-.-" evidence="5"/>
<dbReference type="EMBL" id="M22639">
    <property type="protein sequence ID" value="AAA45366.1"/>
    <property type="status" value="ALT_SEQ"/>
    <property type="molecule type" value="Genomic_RNA"/>
</dbReference>
<dbReference type="PIR" id="S54378">
    <property type="entry name" value="S54378"/>
</dbReference>
<dbReference type="PDB" id="1E28">
    <property type="method" value="X-ray"/>
    <property type="resolution" value="3.00 A"/>
    <property type="chains" value="C=716-723"/>
</dbReference>
<dbReference type="PDB" id="1HXW">
    <property type="method" value="X-ray"/>
    <property type="resolution" value="1.80 A"/>
    <property type="chains" value="A/B=490-588"/>
</dbReference>
<dbReference type="PDB" id="1P7Q">
    <property type="method" value="X-ray"/>
    <property type="resolution" value="3.40 A"/>
    <property type="chains" value="C=897-905"/>
</dbReference>
<dbReference type="PDB" id="1PRO">
    <property type="method" value="X-ray"/>
    <property type="resolution" value="1.80 A"/>
    <property type="chains" value="A/B=490-588"/>
</dbReference>
<dbReference type="PDB" id="1Q94">
    <property type="method" value="X-ray"/>
    <property type="resolution" value="2.40 A"/>
    <property type="chains" value="C/F=746-754"/>
</dbReference>
<dbReference type="PDB" id="1VIJ">
    <property type="method" value="X-ray"/>
    <property type="resolution" value="2.40 A"/>
    <property type="chains" value="A/B=490-588"/>
</dbReference>
<dbReference type="PDB" id="1VIK">
    <property type="method" value="X-ray"/>
    <property type="resolution" value="2.40 A"/>
    <property type="chains" value="A/B=490-588"/>
</dbReference>
<dbReference type="PDB" id="2WKZ">
    <property type="method" value="X-ray"/>
    <property type="resolution" value="1.70 A"/>
    <property type="chains" value="A/B=490-588"/>
</dbReference>
<dbReference type="PDB" id="2WL0">
    <property type="method" value="X-ray"/>
    <property type="resolution" value="1.90 A"/>
    <property type="chains" value="A/B=490-588"/>
</dbReference>
<dbReference type="PDB" id="2XYE">
    <property type="method" value="X-ray"/>
    <property type="resolution" value="2.00 A"/>
    <property type="chains" value="A/B=490-588"/>
</dbReference>
<dbReference type="PDB" id="2XYF">
    <property type="method" value="X-ray"/>
    <property type="resolution" value="1.80 A"/>
    <property type="chains" value="A/B=490-588"/>
</dbReference>
<dbReference type="PDB" id="3KF0">
    <property type="method" value="X-ray"/>
    <property type="resolution" value="1.80 A"/>
    <property type="chains" value="A/B=490-588"/>
</dbReference>
<dbReference type="PDB" id="3KFN">
    <property type="method" value="X-ray"/>
    <property type="resolution" value="1.77 A"/>
    <property type="chains" value="A/B=490-588"/>
</dbReference>
<dbReference type="PDB" id="3KFP">
    <property type="method" value="X-ray"/>
    <property type="resolution" value="1.77 A"/>
    <property type="chains" value="A=490-588"/>
</dbReference>
<dbReference type="PDB" id="3KFR">
    <property type="method" value="X-ray"/>
    <property type="resolution" value="1.30 A"/>
    <property type="chains" value="A/B=490-588"/>
</dbReference>
<dbReference type="PDB" id="3KFS">
    <property type="method" value="X-ray"/>
    <property type="resolution" value="1.80 A"/>
    <property type="chains" value="A/B=490-588"/>
</dbReference>
<dbReference type="PDB" id="3W39">
    <property type="method" value="X-ray"/>
    <property type="resolution" value="3.10 A"/>
    <property type="chains" value="C/F=716-723"/>
</dbReference>
<dbReference type="PDB" id="4DQB">
    <property type="method" value="X-ray"/>
    <property type="resolution" value="1.50 A"/>
    <property type="chains" value="A/B=490-588"/>
</dbReference>
<dbReference type="PDB" id="4DQC">
    <property type="method" value="X-ray"/>
    <property type="resolution" value="1.94 A"/>
    <property type="chains" value="A/B=490-588"/>
</dbReference>
<dbReference type="PDB" id="4DQE">
    <property type="method" value="X-ray"/>
    <property type="resolution" value="1.30 A"/>
    <property type="chains" value="A/B=490-588"/>
</dbReference>
<dbReference type="PDB" id="4DQF">
    <property type="method" value="X-ray"/>
    <property type="resolution" value="1.90 A"/>
    <property type="chains" value="A/B=490-588"/>
</dbReference>
<dbReference type="PDB" id="4DQG">
    <property type="method" value="X-ray"/>
    <property type="resolution" value="2.79 A"/>
    <property type="chains" value="A/B=490-588"/>
</dbReference>
<dbReference type="PDB" id="4DQH">
    <property type="method" value="X-ray"/>
    <property type="resolution" value="1.79 A"/>
    <property type="chains" value="A/B=490-588"/>
</dbReference>
<dbReference type="PDB" id="4E43">
    <property type="method" value="X-ray"/>
    <property type="resolution" value="1.54 A"/>
    <property type="chains" value="A/B=490-588"/>
</dbReference>
<dbReference type="PDB" id="4EJ8">
    <property type="method" value="X-ray"/>
    <property type="resolution" value="2.35 A"/>
    <property type="chains" value="A/B=490-588"/>
</dbReference>
<dbReference type="PDB" id="4EJD">
    <property type="method" value="X-ray"/>
    <property type="resolution" value="1.10 A"/>
    <property type="chains" value="A/B=490-588"/>
</dbReference>
<dbReference type="PDB" id="4EJK">
    <property type="method" value="X-ray"/>
    <property type="resolution" value="1.79 A"/>
    <property type="chains" value="A/B=490-588"/>
</dbReference>
<dbReference type="PDB" id="4EJL">
    <property type="method" value="X-ray"/>
    <property type="resolution" value="2.44 A"/>
    <property type="chains" value="A/B=490-588"/>
</dbReference>
<dbReference type="PDB" id="4K4P">
    <property type="method" value="X-ray"/>
    <property type="resolution" value="2.31 A"/>
    <property type="chains" value="A/B=490-588"/>
</dbReference>
<dbReference type="PDB" id="4K4Q">
    <property type="method" value="X-ray"/>
    <property type="resolution" value="1.80 A"/>
    <property type="chains" value="A/B=490-588"/>
</dbReference>
<dbReference type="PDB" id="4K4R">
    <property type="method" value="X-ray"/>
    <property type="resolution" value="1.80 A"/>
    <property type="chains" value="A/B=490-588"/>
</dbReference>
<dbReference type="PDBsum" id="1E28"/>
<dbReference type="PDBsum" id="1HXW"/>
<dbReference type="PDBsum" id="1P7Q"/>
<dbReference type="PDBsum" id="1PRO"/>
<dbReference type="PDBsum" id="1Q94"/>
<dbReference type="PDBsum" id="1VIJ"/>
<dbReference type="PDBsum" id="1VIK"/>
<dbReference type="PDBsum" id="2WKZ"/>
<dbReference type="PDBsum" id="2WL0"/>
<dbReference type="PDBsum" id="2XYE"/>
<dbReference type="PDBsum" id="2XYF"/>
<dbReference type="PDBsum" id="3KF0"/>
<dbReference type="PDBsum" id="3KFN"/>
<dbReference type="PDBsum" id="3KFP"/>
<dbReference type="PDBsum" id="3KFR"/>
<dbReference type="PDBsum" id="3KFS"/>
<dbReference type="PDBsum" id="3W39"/>
<dbReference type="PDBsum" id="4DQB"/>
<dbReference type="PDBsum" id="4DQC"/>
<dbReference type="PDBsum" id="4DQE"/>
<dbReference type="PDBsum" id="4DQF"/>
<dbReference type="PDBsum" id="4DQG"/>
<dbReference type="PDBsum" id="4DQH"/>
<dbReference type="PDBsum" id="4E43"/>
<dbReference type="PDBsum" id="4EJ8"/>
<dbReference type="PDBsum" id="4EJD"/>
<dbReference type="PDBsum" id="4EJK"/>
<dbReference type="PDBsum" id="4EJL"/>
<dbReference type="PDBsum" id="4K4P"/>
<dbReference type="PDBsum" id="4K4Q"/>
<dbReference type="PDBsum" id="4K4R"/>
<dbReference type="SMR" id="P12499"/>
<dbReference type="IntAct" id="P12499">
    <property type="interactions" value="1"/>
</dbReference>
<dbReference type="DrugBank" id="DB02804">
    <property type="generic name" value="A-98881"/>
</dbReference>
<dbReference type="DrugBank" id="DB01887">
    <property type="generic name" value="N,N-[2,5-O-Dibenzyl-glucaryl]-DI-[1-amino-indan-2-OL]"/>
</dbReference>
<dbReference type="DrugBank" id="DB04353">
    <property type="generic name" value="Tert-butyl N-[(2S,5R)-6-[[(2S)-5-amino-1-[[(2S)-1-amino-1-oxo-3-phenylpropan-2-yl]amino]-1,5-dioxopentan-2-yl]amino]-5-benzyl-3,6-dioxo-1-phenylhexan-2-yl]carbamate"/>
</dbReference>
<dbReference type="MEROPS" id="A02.001"/>
<dbReference type="EvolutionaryTrace" id="P12499"/>
<dbReference type="PRO" id="PR:P12499"/>
<dbReference type="Proteomes" id="UP000155099">
    <property type="component" value="Genome"/>
</dbReference>
<dbReference type="GO" id="GO:0043657">
    <property type="term" value="C:host cell"/>
    <property type="evidence" value="ECO:0007669"/>
    <property type="project" value="GOC"/>
</dbReference>
<dbReference type="GO" id="GO:0042025">
    <property type="term" value="C:host cell nucleus"/>
    <property type="evidence" value="ECO:0007669"/>
    <property type="project" value="UniProtKB-SubCell"/>
</dbReference>
<dbReference type="GO" id="GO:0020002">
    <property type="term" value="C:host cell plasma membrane"/>
    <property type="evidence" value="ECO:0007669"/>
    <property type="project" value="UniProtKB-SubCell"/>
</dbReference>
<dbReference type="GO" id="GO:0072494">
    <property type="term" value="C:host multivesicular body"/>
    <property type="evidence" value="ECO:0007669"/>
    <property type="project" value="UniProtKB-SubCell"/>
</dbReference>
<dbReference type="GO" id="GO:0016020">
    <property type="term" value="C:membrane"/>
    <property type="evidence" value="ECO:0007669"/>
    <property type="project" value="UniProtKB-KW"/>
</dbReference>
<dbReference type="GO" id="GO:0019013">
    <property type="term" value="C:viral nucleocapsid"/>
    <property type="evidence" value="ECO:0007669"/>
    <property type="project" value="UniProtKB-KW"/>
</dbReference>
<dbReference type="GO" id="GO:0055036">
    <property type="term" value="C:virion membrane"/>
    <property type="evidence" value="ECO:0007669"/>
    <property type="project" value="UniProtKB-SubCell"/>
</dbReference>
<dbReference type="GO" id="GO:0004190">
    <property type="term" value="F:aspartic-type endopeptidase activity"/>
    <property type="evidence" value="ECO:0007669"/>
    <property type="project" value="UniProtKB-KW"/>
</dbReference>
<dbReference type="GO" id="GO:0003677">
    <property type="term" value="F:DNA binding"/>
    <property type="evidence" value="ECO:0007669"/>
    <property type="project" value="UniProtKB-KW"/>
</dbReference>
<dbReference type="GO" id="GO:0003887">
    <property type="term" value="F:DNA-directed DNA polymerase activity"/>
    <property type="evidence" value="ECO:0007669"/>
    <property type="project" value="UniProtKB-KW"/>
</dbReference>
<dbReference type="GO" id="GO:0004533">
    <property type="term" value="F:exoribonuclease H activity"/>
    <property type="evidence" value="ECO:0007669"/>
    <property type="project" value="UniProtKB-EC"/>
</dbReference>
<dbReference type="GO" id="GO:0008289">
    <property type="term" value="F:lipid binding"/>
    <property type="evidence" value="ECO:0007669"/>
    <property type="project" value="UniProtKB-KW"/>
</dbReference>
<dbReference type="GO" id="GO:0035613">
    <property type="term" value="F:RNA stem-loop binding"/>
    <property type="evidence" value="ECO:0007669"/>
    <property type="project" value="TreeGrafter"/>
</dbReference>
<dbReference type="GO" id="GO:0003964">
    <property type="term" value="F:RNA-directed DNA polymerase activity"/>
    <property type="evidence" value="ECO:0007669"/>
    <property type="project" value="UniProtKB-KW"/>
</dbReference>
<dbReference type="GO" id="GO:0004523">
    <property type="term" value="F:RNA-DNA hybrid ribonuclease activity"/>
    <property type="evidence" value="ECO:0007669"/>
    <property type="project" value="InterPro"/>
</dbReference>
<dbReference type="GO" id="GO:0005198">
    <property type="term" value="F:structural molecule activity"/>
    <property type="evidence" value="ECO:0007669"/>
    <property type="project" value="InterPro"/>
</dbReference>
<dbReference type="GO" id="GO:0008270">
    <property type="term" value="F:zinc ion binding"/>
    <property type="evidence" value="ECO:0007669"/>
    <property type="project" value="UniProtKB-KW"/>
</dbReference>
<dbReference type="GO" id="GO:0015074">
    <property type="term" value="P:DNA integration"/>
    <property type="evidence" value="ECO:0007669"/>
    <property type="project" value="UniProtKB-KW"/>
</dbReference>
<dbReference type="GO" id="GO:0006310">
    <property type="term" value="P:DNA recombination"/>
    <property type="evidence" value="ECO:0007669"/>
    <property type="project" value="UniProtKB-KW"/>
</dbReference>
<dbReference type="GO" id="GO:0075713">
    <property type="term" value="P:establishment of integrated proviral latency"/>
    <property type="evidence" value="ECO:0007669"/>
    <property type="project" value="UniProtKB-KW"/>
</dbReference>
<dbReference type="GO" id="GO:0006508">
    <property type="term" value="P:proteolysis"/>
    <property type="evidence" value="ECO:0007669"/>
    <property type="project" value="UniProtKB-KW"/>
</dbReference>
<dbReference type="GO" id="GO:0046718">
    <property type="term" value="P:symbiont entry into host cell"/>
    <property type="evidence" value="ECO:0007669"/>
    <property type="project" value="UniProtKB-KW"/>
</dbReference>
<dbReference type="GO" id="GO:0052151">
    <property type="term" value="P:symbiont-mediated activation of host apoptosis"/>
    <property type="evidence" value="ECO:0007669"/>
    <property type="project" value="UniProtKB-KW"/>
</dbReference>
<dbReference type="GO" id="GO:0039657">
    <property type="term" value="P:symbiont-mediated suppression of host gene expression"/>
    <property type="evidence" value="ECO:0007669"/>
    <property type="project" value="UniProtKB-KW"/>
</dbReference>
<dbReference type="GO" id="GO:0044826">
    <property type="term" value="P:viral genome integration into host DNA"/>
    <property type="evidence" value="ECO:0007669"/>
    <property type="project" value="UniProtKB-KW"/>
</dbReference>
<dbReference type="GO" id="GO:0075732">
    <property type="term" value="P:viral penetration into host nucleus"/>
    <property type="evidence" value="ECO:0007669"/>
    <property type="project" value="UniProtKB-KW"/>
</dbReference>
<dbReference type="GO" id="GO:0075523">
    <property type="term" value="P:viral translational frameshifting"/>
    <property type="evidence" value="ECO:0007669"/>
    <property type="project" value="UniProtKB-KW"/>
</dbReference>
<dbReference type="CDD" id="cd05482">
    <property type="entry name" value="HIV_retropepsin_like"/>
    <property type="match status" value="1"/>
</dbReference>
<dbReference type="CDD" id="cd01645">
    <property type="entry name" value="RT_Rtv"/>
    <property type="match status" value="1"/>
</dbReference>
<dbReference type="FunFam" id="1.10.1200.30:FF:000001">
    <property type="entry name" value="Gag polyprotein"/>
    <property type="match status" value="1"/>
</dbReference>
<dbReference type="FunFam" id="1.10.375.10:FF:000001">
    <property type="entry name" value="Gag polyprotein"/>
    <property type="match status" value="1"/>
</dbReference>
<dbReference type="FunFam" id="4.10.60.10:FF:000001">
    <property type="entry name" value="Gag polyprotein"/>
    <property type="match status" value="1"/>
</dbReference>
<dbReference type="FunFam" id="2.40.70.10:FF:000001">
    <property type="entry name" value="Gag-Pol polyprotein"/>
    <property type="match status" value="1"/>
</dbReference>
<dbReference type="FunFam" id="3.30.420.10:FF:000025">
    <property type="entry name" value="Gag-Pol polyprotein"/>
    <property type="match status" value="1"/>
</dbReference>
<dbReference type="FunFam" id="2.30.30.10:FF:000001">
    <property type="entry name" value="POL polyprotein"/>
    <property type="match status" value="1"/>
</dbReference>
<dbReference type="FunFam" id="3.30.420.10:FF:000017">
    <property type="entry name" value="POL polyprotein"/>
    <property type="match status" value="1"/>
</dbReference>
<dbReference type="FunFam" id="3.30.70.270:FF:000016">
    <property type="entry name" value="POL polyprotein"/>
    <property type="match status" value="1"/>
</dbReference>
<dbReference type="Gene3D" id="1.10.10.200">
    <property type="match status" value="1"/>
</dbReference>
<dbReference type="Gene3D" id="1.10.1200.30">
    <property type="match status" value="1"/>
</dbReference>
<dbReference type="Gene3D" id="3.30.70.270">
    <property type="match status" value="3"/>
</dbReference>
<dbReference type="Gene3D" id="2.40.70.10">
    <property type="entry name" value="Acid Proteases"/>
    <property type="match status" value="1"/>
</dbReference>
<dbReference type="Gene3D" id="3.10.10.10">
    <property type="entry name" value="HIV Type 1 Reverse Transcriptase, subunit A, domain 1"/>
    <property type="match status" value="1"/>
</dbReference>
<dbReference type="Gene3D" id="1.10.375.10">
    <property type="entry name" value="Human Immunodeficiency Virus Type 1 Capsid Protein"/>
    <property type="match status" value="1"/>
</dbReference>
<dbReference type="Gene3D" id="1.10.150.90">
    <property type="entry name" value="Immunodeficiency lentiviruses, gag gene matrix protein p17"/>
    <property type="match status" value="1"/>
</dbReference>
<dbReference type="Gene3D" id="2.30.30.10">
    <property type="entry name" value="Integrase, C-terminal domain superfamily, retroviral"/>
    <property type="match status" value="1"/>
</dbReference>
<dbReference type="Gene3D" id="3.30.420.10">
    <property type="entry name" value="Ribonuclease H-like superfamily/Ribonuclease H"/>
    <property type="match status" value="2"/>
</dbReference>
<dbReference type="Gene3D" id="1.20.5.760">
    <property type="entry name" value="Single helix bin"/>
    <property type="match status" value="1"/>
</dbReference>
<dbReference type="Gene3D" id="4.10.60.10">
    <property type="entry name" value="Zinc finger, CCHC-type"/>
    <property type="match status" value="1"/>
</dbReference>
<dbReference type="InterPro" id="IPR001969">
    <property type="entry name" value="Aspartic_peptidase_AS"/>
</dbReference>
<dbReference type="InterPro" id="IPR043502">
    <property type="entry name" value="DNA/RNA_pol_sf"/>
</dbReference>
<dbReference type="InterPro" id="IPR045345">
    <property type="entry name" value="Gag_p24_C"/>
</dbReference>
<dbReference type="InterPro" id="IPR017856">
    <property type="entry name" value="Integrase-like_N"/>
</dbReference>
<dbReference type="InterPro" id="IPR036862">
    <property type="entry name" value="Integrase_C_dom_sf_retrovir"/>
</dbReference>
<dbReference type="InterPro" id="IPR001037">
    <property type="entry name" value="Integrase_C_retrovir"/>
</dbReference>
<dbReference type="InterPro" id="IPR001584">
    <property type="entry name" value="Integrase_cat-core"/>
</dbReference>
<dbReference type="InterPro" id="IPR003308">
    <property type="entry name" value="Integrase_Zn-bd_dom_N"/>
</dbReference>
<dbReference type="InterPro" id="IPR000071">
    <property type="entry name" value="Lentvrl_matrix_N"/>
</dbReference>
<dbReference type="InterPro" id="IPR012344">
    <property type="entry name" value="Matrix_HIV/RSV_N"/>
</dbReference>
<dbReference type="InterPro" id="IPR001995">
    <property type="entry name" value="Peptidase_A2_cat"/>
</dbReference>
<dbReference type="InterPro" id="IPR021109">
    <property type="entry name" value="Peptidase_aspartic_dom_sf"/>
</dbReference>
<dbReference type="InterPro" id="IPR034170">
    <property type="entry name" value="Retropepsin-like_cat_dom"/>
</dbReference>
<dbReference type="InterPro" id="IPR018061">
    <property type="entry name" value="Retropepsins"/>
</dbReference>
<dbReference type="InterPro" id="IPR008916">
    <property type="entry name" value="Retrov_capsid_C"/>
</dbReference>
<dbReference type="InterPro" id="IPR008919">
    <property type="entry name" value="Retrov_capsid_N"/>
</dbReference>
<dbReference type="InterPro" id="IPR010999">
    <property type="entry name" value="Retrovr_matrix"/>
</dbReference>
<dbReference type="InterPro" id="IPR043128">
    <property type="entry name" value="Rev_trsase/Diguanyl_cyclase"/>
</dbReference>
<dbReference type="InterPro" id="IPR012337">
    <property type="entry name" value="RNaseH-like_sf"/>
</dbReference>
<dbReference type="InterPro" id="IPR002156">
    <property type="entry name" value="RNaseH_domain"/>
</dbReference>
<dbReference type="InterPro" id="IPR036397">
    <property type="entry name" value="RNaseH_sf"/>
</dbReference>
<dbReference type="InterPro" id="IPR000477">
    <property type="entry name" value="RT_dom"/>
</dbReference>
<dbReference type="InterPro" id="IPR010659">
    <property type="entry name" value="RVT_connect"/>
</dbReference>
<dbReference type="InterPro" id="IPR010661">
    <property type="entry name" value="RVT_thumb"/>
</dbReference>
<dbReference type="InterPro" id="IPR001878">
    <property type="entry name" value="Znf_CCHC"/>
</dbReference>
<dbReference type="InterPro" id="IPR036875">
    <property type="entry name" value="Znf_CCHC_sf"/>
</dbReference>
<dbReference type="PANTHER" id="PTHR41694">
    <property type="entry name" value="ENDOGENOUS RETROVIRUS GROUP K MEMBER POL PROTEIN"/>
    <property type="match status" value="1"/>
</dbReference>
<dbReference type="PANTHER" id="PTHR41694:SF3">
    <property type="entry name" value="RNA-DIRECTED DNA POLYMERASE-RELATED"/>
    <property type="match status" value="1"/>
</dbReference>
<dbReference type="Pfam" id="PF00540">
    <property type="entry name" value="Gag_p17"/>
    <property type="match status" value="1"/>
</dbReference>
<dbReference type="Pfam" id="PF19317">
    <property type="entry name" value="Gag_p24_C"/>
    <property type="match status" value="1"/>
</dbReference>
<dbReference type="Pfam" id="PF00552">
    <property type="entry name" value="IN_DBD_C"/>
    <property type="match status" value="1"/>
</dbReference>
<dbReference type="Pfam" id="PF02022">
    <property type="entry name" value="Integrase_Zn"/>
    <property type="match status" value="1"/>
</dbReference>
<dbReference type="Pfam" id="PF00075">
    <property type="entry name" value="RNase_H"/>
    <property type="match status" value="1"/>
</dbReference>
<dbReference type="Pfam" id="PF00665">
    <property type="entry name" value="rve"/>
    <property type="match status" value="1"/>
</dbReference>
<dbReference type="Pfam" id="PF00077">
    <property type="entry name" value="RVP"/>
    <property type="match status" value="1"/>
</dbReference>
<dbReference type="Pfam" id="PF00078">
    <property type="entry name" value="RVT_1"/>
    <property type="match status" value="1"/>
</dbReference>
<dbReference type="Pfam" id="PF06815">
    <property type="entry name" value="RVT_connect"/>
    <property type="match status" value="1"/>
</dbReference>
<dbReference type="Pfam" id="PF06817">
    <property type="entry name" value="RVT_thumb"/>
    <property type="match status" value="1"/>
</dbReference>
<dbReference type="Pfam" id="PF00098">
    <property type="entry name" value="zf-CCHC"/>
    <property type="match status" value="2"/>
</dbReference>
<dbReference type="PRINTS" id="PR00234">
    <property type="entry name" value="HIV1MATRIX"/>
</dbReference>
<dbReference type="SMART" id="SM00343">
    <property type="entry name" value="ZnF_C2HC"/>
    <property type="match status" value="2"/>
</dbReference>
<dbReference type="SUPFAM" id="SSF50630">
    <property type="entry name" value="Acid proteases"/>
    <property type="match status" value="1"/>
</dbReference>
<dbReference type="SUPFAM" id="SSF50122">
    <property type="entry name" value="DNA-binding domain of retroviral integrase"/>
    <property type="match status" value="1"/>
</dbReference>
<dbReference type="SUPFAM" id="SSF56672">
    <property type="entry name" value="DNA/RNA polymerases"/>
    <property type="match status" value="1"/>
</dbReference>
<dbReference type="SUPFAM" id="SSF46919">
    <property type="entry name" value="N-terminal Zn binding domain of HIV integrase"/>
    <property type="match status" value="1"/>
</dbReference>
<dbReference type="SUPFAM" id="SSF47836">
    <property type="entry name" value="Retroviral matrix proteins"/>
    <property type="match status" value="1"/>
</dbReference>
<dbReference type="SUPFAM" id="SSF47353">
    <property type="entry name" value="Retrovirus capsid dimerization domain-like"/>
    <property type="match status" value="1"/>
</dbReference>
<dbReference type="SUPFAM" id="SSF47943">
    <property type="entry name" value="Retrovirus capsid protein, N-terminal core domain"/>
    <property type="match status" value="1"/>
</dbReference>
<dbReference type="SUPFAM" id="SSF57756">
    <property type="entry name" value="Retrovirus zinc finger-like domains"/>
    <property type="match status" value="1"/>
</dbReference>
<dbReference type="SUPFAM" id="SSF53098">
    <property type="entry name" value="Ribonuclease H-like"/>
    <property type="match status" value="2"/>
</dbReference>
<dbReference type="PROSITE" id="PS50175">
    <property type="entry name" value="ASP_PROT_RETROV"/>
    <property type="match status" value="1"/>
</dbReference>
<dbReference type="PROSITE" id="PS00141">
    <property type="entry name" value="ASP_PROTEASE"/>
    <property type="match status" value="1"/>
</dbReference>
<dbReference type="PROSITE" id="PS50994">
    <property type="entry name" value="INTEGRASE"/>
    <property type="match status" value="1"/>
</dbReference>
<dbReference type="PROSITE" id="PS51027">
    <property type="entry name" value="INTEGRASE_DBD"/>
    <property type="match status" value="1"/>
</dbReference>
<dbReference type="PROSITE" id="PS50879">
    <property type="entry name" value="RNASE_H_1"/>
    <property type="match status" value="1"/>
</dbReference>
<dbReference type="PROSITE" id="PS50878">
    <property type="entry name" value="RT_POL"/>
    <property type="match status" value="1"/>
</dbReference>
<dbReference type="PROSITE" id="PS50158">
    <property type="entry name" value="ZF_CCHC"/>
    <property type="match status" value="2"/>
</dbReference>
<dbReference type="PROSITE" id="PS50876">
    <property type="entry name" value="ZF_INTEGRASE"/>
    <property type="match status" value="1"/>
</dbReference>
<sequence>MGARASVLSGGKLDAWEKIRLRPGGKKKYRLKHLVWASRELERFALNPGLLETSDGCKQIIGQLQPAIRTGSEELRSLFNTVATLYCVHERIEVKDTKEALEKMEEEQNKSKNKKAQQAAADAGNNSQVSQNYPIVQNLQGQMVHQAISPRTLNAWVKVIEEKAFSPEVIPMFSALSEGATPQDLNTMLNTVGGHQAAMQMLKETINEEAAEWDRLHPVHAGPIAPGQMREPRGSDIAGTTSTLQEQIAWMTSNPPIPVGEIYKRWIILGLNKIVRMYSPVSILDIRQGPKEPFRDYVDRFYKTLRAEQASQEVKGWMTETLLVQNANPDCKTILKALGPQATLEEMMTACQGVGGPSHKARVLAEAMSQATNSAAAVMMQRGNFKGPRKTIKCFNCGKEGHIAKNCRAPRRKGCWKCGKEGHQLKDCTERQANFLREDLAFPQGKAGELSSEQTRANSPTSRELRVWGRDNPLSETGAERQGTVSFNCPQITLWQRPLVTIKIGGQLKEALLDTGADDTVLEEMNLPGKWKPKMIGGIGGFIKVRQYDQILIEICGHKAIGTVLVGPTPVNIIGRNLLTQIGCTLNFPISPIETVPVKLKPGMDGPKVKQWPLTEEKIKALTEICTEMEKEGKISRVGPENPYNTPIFAIKKKDSTKWRKLVDFRELNKRTQDFWEVQLGIPHPAGLKKKKSVTVLDVGDAYFSVPLDKDFRKYTAFTIPSINNETPGIRYQYNVLPQGWKGSPAIFQSSMTKILEPFRKQNPEIVIYQYMDDLYVGSDLEIGQHRTKIEELREHLLRWGFTTPDKKHQKEPPFLWMGYELHPDKWTVQSIKLPEKESWTVNDIQKLVGKLNWASQIYPGIKVRQLCKLLRGTKALTEVIPLTEEAELELAENREILKEPVHGVYYDPSKDLIAEIQKQGHGQWTYQIYQEPFKNLKTGKYARMRGAHTNDVKQLAEVVQKISTESIVIWGKTPKFRLPIQKETWETWWVEYWQATWIPEWEFVNTPPLVKLWYQLEKEPIIGAETFYVDGAANRETKLGKAGYVTDRGRQKVVPFTDTTNQKTELQAINLALQDSGLEVNIVTDSQYALGIIQAQPDKSESELVSQIIEQLIKKEKVYLAWVPAHKGIGGNEQVDKLVSQGIRKVLFLDGIDKAQEEHEKYHNNWRAMASDFNLPPVVAKEIVASCDKCQLKGEAMHGQVDCSPGIWQLDCTHLEGKVILVAVHVASGYIEAEVIPAETGQETAYFILKLAGRWPVKIVHTDNGSNFTSAAVKAACWWAGIKQEFGIPYNPQSQGVVESMNKELKKIIGQVRDQAEHLKTAVQMAVFIHNFKRKGGIGGYSAGERIIDIIATDIQTKELQKQITKIQNFRVYYRDSRDPIWKGPAKLLWKGEGAVVIQDNSDIKVVPRRKVKIIRDYGKQMAGDDCVASRQDED</sequence>
<feature type="initiator methionine" description="Removed; by host" evidence="1">
    <location>
        <position position="1"/>
    </location>
</feature>
<feature type="chain" id="PRO_0000261288" description="Gag-Pol polyprotein">
    <location>
        <begin position="2"/>
        <end position="1436"/>
    </location>
</feature>
<feature type="chain" id="PRO_0000042312" description="Matrix protein p17" evidence="1">
    <location>
        <begin position="2"/>
        <end position="133"/>
    </location>
</feature>
<feature type="chain" id="PRO_0000042313" description="Capsid protein p24" evidence="1">
    <location>
        <begin position="134"/>
        <end position="364"/>
    </location>
</feature>
<feature type="peptide" id="PRO_0000042314" description="Spacer peptide 1" evidence="1">
    <location>
        <begin position="365"/>
        <end position="378"/>
    </location>
</feature>
<feature type="chain" id="PRO_0000042315" description="Nucleocapsid protein p7" evidence="1">
    <location>
        <begin position="379"/>
        <end position="434"/>
    </location>
</feature>
<feature type="peptide" id="PRO_0000246738" description="Transframe peptide" evidence="8">
    <location>
        <begin position="435"/>
        <end position="442"/>
    </location>
</feature>
<feature type="chain" id="PRO_0000042316" description="p6-pol" evidence="8">
    <location>
        <begin position="443"/>
        <end position="489"/>
    </location>
</feature>
<feature type="chain" id="PRO_0000038650" description="Protease" evidence="1">
    <location>
        <begin position="490"/>
        <end position="588"/>
    </location>
</feature>
<feature type="chain" id="PRO_0000042317" description="Reverse transcriptase/ribonuclease H" evidence="1">
    <location>
        <begin position="589"/>
        <end position="1148"/>
    </location>
</feature>
<feature type="chain" id="PRO_0000042318" description="p51 RT" evidence="1">
    <location>
        <begin position="589"/>
        <end position="1028"/>
    </location>
</feature>
<feature type="chain" id="PRO_0000042319" description="p15" evidence="1">
    <location>
        <begin position="1029"/>
        <end position="1148"/>
    </location>
</feature>
<feature type="chain" id="PRO_0000042320" description="Integrase" evidence="1">
    <location>
        <begin position="1149"/>
        <end position="1436"/>
    </location>
</feature>
<feature type="domain" description="Peptidase A2" evidence="10">
    <location>
        <begin position="509"/>
        <end position="578"/>
    </location>
</feature>
<feature type="domain" description="Reverse transcriptase" evidence="11">
    <location>
        <begin position="632"/>
        <end position="822"/>
    </location>
</feature>
<feature type="domain" description="RNase H type-1" evidence="12">
    <location>
        <begin position="1022"/>
        <end position="1145"/>
    </location>
</feature>
<feature type="domain" description="Integrase catalytic" evidence="14">
    <location>
        <begin position="1202"/>
        <end position="1352"/>
    </location>
</feature>
<feature type="zinc finger region" description="CCHC-type 1" evidence="9">
    <location>
        <begin position="392"/>
        <end position="409"/>
    </location>
</feature>
<feature type="zinc finger region" description="CCHC-type 2" evidence="9">
    <location>
        <begin position="413"/>
        <end position="430"/>
    </location>
</feature>
<feature type="zinc finger region" description="Integrase-type" evidence="13">
    <location>
        <begin position="1151"/>
        <end position="1192"/>
    </location>
</feature>
<feature type="DNA-binding region" description="Integrase-type" evidence="15">
    <location>
        <begin position="1371"/>
        <end position="1418"/>
    </location>
</feature>
<feature type="region of interest" description="Interaction with Gp41" evidence="7">
    <location>
        <begin position="7"/>
        <end position="31"/>
    </location>
</feature>
<feature type="region of interest" description="Interaction with host CALM1" evidence="5">
    <location>
        <begin position="8"/>
        <end position="43"/>
    </location>
</feature>
<feature type="region of interest" description="Interaction with host AP3D1" evidence="7">
    <location>
        <begin position="12"/>
        <end position="19"/>
    </location>
</feature>
<feature type="region of interest" description="Interaction with membrane phosphatidylinositol 4,5-bisphosphate and RNA" evidence="7">
    <location>
        <begin position="14"/>
        <end position="33"/>
    </location>
</feature>
<feature type="region of interest" description="Interaction with membrane phosphatidylinositol 4,5-bisphosphate" evidence="7">
    <location>
        <begin position="73"/>
        <end position="77"/>
    </location>
</feature>
<feature type="region of interest" description="Disordered" evidence="17">
    <location>
        <begin position="102"/>
        <end position="129"/>
    </location>
</feature>
<feature type="region of interest" description="Interaction with human PPIA/CYPA and NUP153" evidence="7">
    <location>
        <begin position="190"/>
        <end position="228"/>
    </location>
</feature>
<feature type="region of interest" description="Dimerization/Multimerization of capsid protein p24" evidence="5">
    <location>
        <begin position="278"/>
        <end position="364"/>
    </location>
</feature>
<feature type="region of interest" description="Dimerization of protease" evidence="5">
    <location>
        <begin position="490"/>
        <end position="494"/>
    </location>
</feature>
<feature type="region of interest" description="Dimerization of protease" evidence="5">
    <location>
        <begin position="538"/>
        <end position="544"/>
    </location>
</feature>
<feature type="region of interest" description="Dimerization of protease" evidence="5">
    <location>
        <begin position="577"/>
        <end position="589"/>
    </location>
</feature>
<feature type="region of interest" description="RT 'primer grip'" evidence="1">
    <location>
        <begin position="815"/>
        <end position="823"/>
    </location>
</feature>
<feature type="short sequence motif" description="Nuclear export signal" evidence="1">
    <location>
        <begin position="16"/>
        <end position="22"/>
    </location>
</feature>
<feature type="short sequence motif" description="Nuclear localization signal" evidence="1">
    <location>
        <begin position="26"/>
        <end position="32"/>
    </location>
</feature>
<feature type="short sequence motif" description="Tryptophan repeat motif" evidence="1">
    <location>
        <begin position="986"/>
        <end position="1002"/>
    </location>
</feature>
<feature type="compositionally biased region" description="Low complexity" evidence="17">
    <location>
        <begin position="116"/>
        <end position="128"/>
    </location>
</feature>
<feature type="active site" description="For protease activity; shared with dimeric partner" evidence="16">
    <location>
        <position position="514"/>
    </location>
</feature>
<feature type="binding site" evidence="1">
    <location>
        <position position="698"/>
    </location>
    <ligand>
        <name>Mg(2+)</name>
        <dbReference type="ChEBI" id="CHEBI:18420"/>
        <label>1</label>
        <note>catalytic; for reverse transcriptase activity</note>
    </ligand>
</feature>
<feature type="binding site" evidence="1">
    <location>
        <position position="773"/>
    </location>
    <ligand>
        <name>Mg(2+)</name>
        <dbReference type="ChEBI" id="CHEBI:18420"/>
        <label>1</label>
        <note>catalytic; for reverse transcriptase activity</note>
    </ligand>
</feature>
<feature type="binding site" evidence="1">
    <location>
        <position position="774"/>
    </location>
    <ligand>
        <name>Mg(2+)</name>
        <dbReference type="ChEBI" id="CHEBI:18420"/>
        <label>1</label>
        <note>catalytic; for reverse transcriptase activity</note>
    </ligand>
</feature>
<feature type="binding site" evidence="1">
    <location>
        <position position="1031"/>
    </location>
    <ligand>
        <name>Mg(2+)</name>
        <dbReference type="ChEBI" id="CHEBI:18420"/>
        <label>2</label>
        <note>catalytic; for RNase H activity</note>
    </ligand>
</feature>
<feature type="binding site" evidence="1">
    <location>
        <position position="1066"/>
    </location>
    <ligand>
        <name>Mg(2+)</name>
        <dbReference type="ChEBI" id="CHEBI:18420"/>
        <label>2</label>
        <note>catalytic; for RNase H activity</note>
    </ligand>
</feature>
<feature type="binding site" evidence="1">
    <location>
        <position position="1086"/>
    </location>
    <ligand>
        <name>Mg(2+)</name>
        <dbReference type="ChEBI" id="CHEBI:18420"/>
        <label>2</label>
        <note>catalytic; for RNase H activity</note>
    </ligand>
</feature>
<feature type="binding site" evidence="1">
    <location>
        <position position="1137"/>
    </location>
    <ligand>
        <name>Mg(2+)</name>
        <dbReference type="ChEBI" id="CHEBI:18420"/>
        <label>2</label>
        <note>catalytic; for RNase H activity</note>
    </ligand>
</feature>
<feature type="binding site" evidence="13">
    <location>
        <position position="1160"/>
    </location>
    <ligand>
        <name>Zn(2+)</name>
        <dbReference type="ChEBI" id="CHEBI:29105"/>
    </ligand>
</feature>
<feature type="binding site" evidence="13">
    <location>
        <position position="1164"/>
    </location>
    <ligand>
        <name>Zn(2+)</name>
        <dbReference type="ChEBI" id="CHEBI:29105"/>
    </ligand>
</feature>
<feature type="binding site" evidence="13">
    <location>
        <position position="1188"/>
    </location>
    <ligand>
        <name>Zn(2+)</name>
        <dbReference type="ChEBI" id="CHEBI:29105"/>
    </ligand>
</feature>
<feature type="binding site" evidence="13">
    <location>
        <position position="1191"/>
    </location>
    <ligand>
        <name>Zn(2+)</name>
        <dbReference type="ChEBI" id="CHEBI:29105"/>
    </ligand>
</feature>
<feature type="binding site" evidence="1">
    <location>
        <position position="1212"/>
    </location>
    <ligand>
        <name>Mg(2+)</name>
        <dbReference type="ChEBI" id="CHEBI:18420"/>
        <label>3</label>
        <note>catalytic; for integrase activity</note>
    </ligand>
</feature>
<feature type="binding site" evidence="1">
    <location>
        <position position="1264"/>
    </location>
    <ligand>
        <name>Mg(2+)</name>
        <dbReference type="ChEBI" id="CHEBI:18420"/>
        <label>3</label>
        <note>catalytic; for integrase activity</note>
    </ligand>
</feature>
<feature type="binding site" evidence="5">
    <location>
        <position position="1300"/>
    </location>
    <ligand>
        <name>Mg(2+)</name>
        <dbReference type="ChEBI" id="CHEBI:18420"/>
        <label>3</label>
        <note>catalytic; for integrase activity</note>
    </ligand>
</feature>
<feature type="site" description="Cleavage; by viral protease" evidence="1">
    <location>
        <begin position="133"/>
        <end position="134"/>
    </location>
</feature>
<feature type="site" description="Cis/trans isomerization of proline peptide bond; by human PPIA/CYPA" evidence="1">
    <location>
        <begin position="222"/>
        <end position="223"/>
    </location>
</feature>
<feature type="site" description="Cleavage; by viral protease" evidence="1">
    <location>
        <begin position="364"/>
        <end position="365"/>
    </location>
</feature>
<feature type="site" description="Cleavage; by viral protease" evidence="1">
    <location>
        <begin position="378"/>
        <end position="379"/>
    </location>
</feature>
<feature type="site" description="Cleavage; by viral protease" evidence="8">
    <location>
        <begin position="434"/>
        <end position="435"/>
    </location>
</feature>
<feature type="site" description="Cleavage; by viral protease" evidence="1">
    <location>
        <begin position="442"/>
        <end position="443"/>
    </location>
</feature>
<feature type="site" description="Cleavage; by viral protease" evidence="1">
    <location>
        <begin position="489"/>
        <end position="490"/>
    </location>
</feature>
<feature type="site" description="Cleavage; by viral protease" evidence="1">
    <location>
        <begin position="588"/>
        <end position="589"/>
    </location>
</feature>
<feature type="site" description="Essential for RT p66/p51 heterodimerization" evidence="1">
    <location>
        <position position="989"/>
    </location>
</feature>
<feature type="site" description="Essential for RT p66/p51 heterodimerization" evidence="1">
    <location>
        <position position="1002"/>
    </location>
</feature>
<feature type="site" description="Cleavage; by viral protease; partial" evidence="1">
    <location>
        <begin position="1028"/>
        <end position="1029"/>
    </location>
</feature>
<feature type="site" description="Cleavage; by viral protease" evidence="1">
    <location>
        <begin position="1148"/>
        <end position="1149"/>
    </location>
</feature>
<feature type="modified residue" description="Phosphotyrosine; by host" evidence="1">
    <location>
        <position position="133"/>
    </location>
</feature>
<feature type="lipid moiety-binding region" description="N-myristoyl glycine; by host" evidence="1">
    <location>
        <position position="2"/>
    </location>
</feature>
<feature type="strand" evidence="19">
    <location>
        <begin position="491"/>
        <end position="493"/>
    </location>
</feature>
<feature type="strand" evidence="20">
    <location>
        <begin position="494"/>
        <end position="496"/>
    </location>
</feature>
<feature type="strand" evidence="20">
    <location>
        <begin position="499"/>
        <end position="504"/>
    </location>
</feature>
<feature type="strand" evidence="20">
    <location>
        <begin position="507"/>
        <end position="513"/>
    </location>
</feature>
<feature type="strand" evidence="20">
    <location>
        <begin position="521"/>
        <end position="524"/>
    </location>
</feature>
<feature type="strand" evidence="20">
    <location>
        <begin position="532"/>
        <end position="538"/>
    </location>
</feature>
<feature type="strand" evidence="20">
    <location>
        <begin position="541"/>
        <end position="555"/>
    </location>
</feature>
<feature type="strand" evidence="20">
    <location>
        <begin position="558"/>
        <end position="567"/>
    </location>
</feature>
<feature type="strand" evidence="21">
    <location>
        <begin position="570"/>
        <end position="574"/>
    </location>
</feature>
<feature type="helix" evidence="20">
    <location>
        <begin position="576"/>
        <end position="579"/>
    </location>
</feature>
<feature type="helix" evidence="20">
    <location>
        <begin position="580"/>
        <end position="582"/>
    </location>
</feature>
<feature type="strand" evidence="20">
    <location>
        <begin position="585"/>
        <end position="587"/>
    </location>
</feature>
<organismHost>
    <name type="scientific">Homo sapiens</name>
    <name type="common">Human</name>
    <dbReference type="NCBI Taxonomy" id="9606"/>
</organismHost>
<proteinExistence type="evidence at protein level"/>
<comment type="function">
    <molecule>Gag-Pol polyprotein</molecule>
    <text evidence="1">Mediates, with Gag polyprotein, the essential events in virion assembly, including binding the plasma membrane, making the protein-protein interactions necessary to create spherical particles, recruiting the viral Env proteins, and packaging the genomic RNA via direct interactions with the RNA packaging sequence (Psi). Gag-Pol polyprotein may regulate its own translation, by the binding genomic RNA in the 5'-UTR. At low concentration, the polyprotein would promote translation, whereas at high concentration, the polyprotein would encapsidate genomic RNA and then shut off translation.</text>
</comment>
<comment type="function">
    <molecule>Matrix protein p17</molecule>
    <text evidence="7">Targets the polyprotein to the plasma membrane via a multipartite membrane-binding signal, that includes its myristoylated N-terminus. Matrix protein is part of the pre-integration complex. Implicated in the release from host cell mediated by Vpu. Binds to RNA.</text>
</comment>
<comment type="function">
    <molecule>Capsid protein p24</molecule>
    <text evidence="5 7">Forms the conical core that encapsulates the genomic RNA-nucleocapsid complex in the virion. Most core are conical, with only 7% tubular. The core is constituted by capsid protein hexamer subunits. The core is disassembled soon after virion entry (By similarity). Host restriction factors such as TRIM5-alpha or TRIMCyp bind retroviral capsids and cause premature capsid disassembly, leading to blocks in reverse transcription. Capsid restriction by TRIM5 is one of the factors which restricts HIV-1 to the human species. Host PIN1 apparently facilitates the virion uncoating. On the other hand, interactions with PDZD8 or CYPA stabilize the capsid.</text>
</comment>
<comment type="function">
    <molecule>Nucleocapsid protein p7</molecule>
    <text evidence="5">Encapsulates and protects viral dimeric unspliced genomic RNA (gRNA). Binds these RNAs through its zinc fingers. Acts as a nucleic acid chaperone which is involved in rearangement of nucleic acid secondary structure during gRNA retrotranscription. Also facilitates template switch leading to recombination. As part of the polyprotein, participates in gRNA dimerization, packaging, tRNA incorporation and virion assembly.</text>
</comment>
<comment type="function">
    <molecule>Protease</molecule>
    <text evidence="5 10">Aspartyl protease that mediates proteolytic cleavages of Gag and Gag-Pol polyproteins during or shortly after the release of the virion from the plasma membrane. Cleavages take place as an ordered, step-wise cascade to yield mature proteins. This process is called maturation. Displays maximal activity during the budding process just prior to particle release from the cell. Also cleaves Nef and Vif, probably concomitantly with viral structural proteins on maturation of virus particles. Hydrolyzes host EIF4GI and PABP1 in order to shut off the capped cellular mRNA translation. The resulting inhibition of cellular protein synthesis serves to ensure maximal viral gene expression and to evade host immune response. Also mediates cleavage of host YTHDF3. Mediates cleavage of host CARD8, thereby activating the CARD8 inflammasome, leading to the clearance of latent HIV-1 in patient CD4(+) T-cells after viral reactivation; in contrast, HIV-1 can evade CARD8-sensing when its protease remains inactive in infected cells prior to viral budding (By similarity).</text>
</comment>
<comment type="function">
    <molecule>Reverse transcriptase/ribonuclease H</molecule>
    <text evidence="5">Multifunctional enzyme that converts the viral RNA genome into dsDNA in the cytoplasm, shortly after virus entry into the cell. This enzyme displays a DNA polymerase activity that can copy either DNA or RNA templates, and a ribonuclease H (RNase H) activity that cleaves the RNA strand of RNA-DNA heteroduplexes in a partially processive 3' to 5' endonucleasic mode. Conversion of viral genomic RNA into dsDNA requires many steps. A tRNA(3)-Lys binds to the primer-binding site (PBS) situated at the 5'-end of the viral RNA. RT uses the 3' end of the tRNA primer to perform a short round of RNA-dependent minus-strand DNA synthesis. The reading proceeds through the U5 region and ends after the repeated (R) region which is present at both ends of viral RNA. The portion of the RNA-DNA heteroduplex is digested by the RNase H, resulting in a ssDNA product attached to the tRNA primer. This ssDNA/tRNA hybridizes with the identical R region situated at the 3' end of viral RNA. This template exchange, known as minus-strand DNA strong stop transfer, can be either intra- or intermolecular. RT uses the 3' end of this newly synthesized short ssDNA to perform the RNA-dependent minus-strand DNA synthesis of the whole template. RNase H digests the RNA template except for two polypurine tracts (PPTs) situated at the 5'-end and near the center of the genome. It is not clear if both polymerase and RNase H activities are simultaneous. RNase H probably can proceed both in a polymerase-dependent (RNA cut into small fragments by the same RT performing DNA synthesis) and a polymerase-independent mode (cleavage of remaining RNA fragments by free RTs). Secondly, RT performs DNA-directed plus-strand DNA synthesis using the PPTs that have not been removed by RNase H as primers. PPTs and tRNA primers are then removed by RNase H. The 3' and 5' ssDNA PBS regions hybridize to form a circular dsDNA intermediate. Strand displacement synthesis by RT to the PBS and PPT ends produces a blunt ended, linear dsDNA copy of the viral genome that includes long terminal repeats (LTRs) at both ends.</text>
</comment>
<comment type="function">
    <molecule>Integrase</molecule>
    <text evidence="5">Catalyzes viral DNA integration into the host chromosome, by performing a series of DNA cutting and joining reactions. This enzyme activity takes place after virion entry into a cell and reverse transcription of the RNA genome in dsDNA. The first step in the integration process is 3' processing. This step requires a complex comprising the viral genome, matrix protein, Vpr and integrase. This complex is called the pre-integration complex (PIC). The integrase protein removes 2 nucleotides from each 3' end of the viral DNA, leaving recessed CA OH's at the 3' ends. In the second step, the PIC enters cell nucleus. This process is mediated through integrase and Vpr proteins, and allows the virus to infect a non dividing cell. This ability to enter the nucleus is specific of lentiviruses, other retroviruses cannot and rely on cell division to access cell chromosomes. In the third step, termed strand transfer, the integrase protein joins the previously processed 3' ends to the 5' ends of strands of target cellular DNA at the site of integration. The 5'-ends are produced by integrase-catalyzed staggered cuts, 5 bp apart. A Y-shaped, gapped, recombination intermediate results, with the 5'-ends of the viral DNA strands and the 3' ends of target DNA strands remaining unjoined, flanking a gap of 5 bp. The last step is viral DNA integration into host chromosome. This involves host DNA repair synthesis in which the 5 bp gaps between the unjoined strands are filled in and then ligated. Since this process occurs at both cuts flanking the HIV genome, a 5 bp duplication of host DNA is produced at the ends of HIV-1 integration. Alternatively, Integrase may catalyze the excision of viral DNA just after strand transfer, this is termed disintegration.</text>
</comment>
<comment type="catalytic activity">
    <reaction evidence="10">
        <text>Specific for a P1 residue that is hydrophobic, and P1' variable, but often Pro.</text>
        <dbReference type="EC" id="3.4.23.16"/>
    </reaction>
</comment>
<comment type="catalytic activity">
    <reaction evidence="1">
        <text>Endohydrolysis of RNA in RNA/DNA hybrids. Three different cleavage modes: 1. sequence-specific internal cleavage of RNA. Human immunodeficiency virus type 1 and Moloney murine leukemia virus enzymes prefer to cleave the RNA strand one nucleotide away from the RNA-DNA junction. 2. RNA 5'-end directed cleavage 13-19 nucleotides from the RNA end. 3. DNA 3'-end directed cleavage 15-20 nucleotides away from the primer terminus.</text>
        <dbReference type="EC" id="3.1.26.13"/>
    </reaction>
</comment>
<comment type="catalytic activity">
    <reaction evidence="1">
        <text>3'-end directed exonucleolytic cleavage of viral RNA-DNA hybrid.</text>
        <dbReference type="EC" id="3.1.13.2"/>
    </reaction>
</comment>
<comment type="catalytic activity">
    <reaction evidence="11">
        <text>DNA(n) + a 2'-deoxyribonucleoside 5'-triphosphate = DNA(n+1) + diphosphate</text>
        <dbReference type="Rhea" id="RHEA:22508"/>
        <dbReference type="Rhea" id="RHEA-COMP:17339"/>
        <dbReference type="Rhea" id="RHEA-COMP:17340"/>
        <dbReference type="ChEBI" id="CHEBI:33019"/>
        <dbReference type="ChEBI" id="CHEBI:61560"/>
        <dbReference type="ChEBI" id="CHEBI:173112"/>
        <dbReference type="EC" id="2.7.7.49"/>
    </reaction>
</comment>
<comment type="catalytic activity">
    <reaction evidence="11">
        <text>DNA(n) + a 2'-deoxyribonucleoside 5'-triphosphate = DNA(n+1) + diphosphate</text>
        <dbReference type="Rhea" id="RHEA:22508"/>
        <dbReference type="Rhea" id="RHEA-COMP:17339"/>
        <dbReference type="Rhea" id="RHEA-COMP:17340"/>
        <dbReference type="ChEBI" id="CHEBI:33019"/>
        <dbReference type="ChEBI" id="CHEBI:61560"/>
        <dbReference type="ChEBI" id="CHEBI:173112"/>
        <dbReference type="EC" id="2.7.7.7"/>
    </reaction>
</comment>
<comment type="cofactor">
    <cofactor evidence="1">
        <name>Mg(2+)</name>
        <dbReference type="ChEBI" id="CHEBI:18420"/>
    </cofactor>
    <text evidence="1">Binds 2 magnesium ions for reverse transcriptase polymerase activity.</text>
</comment>
<comment type="cofactor">
    <cofactor evidence="1">
        <name>Mg(2+)</name>
        <dbReference type="ChEBI" id="CHEBI:18420"/>
    </cofactor>
    <text evidence="1">Binds 2 magnesium ions for ribonuclease H (RNase H) activity. Substrate-binding is a precondition for magnesium binding.</text>
</comment>
<comment type="cofactor">
    <cofactor evidence="1">
        <name>Mg(2+)</name>
        <dbReference type="ChEBI" id="CHEBI:18420"/>
    </cofactor>
    <text evidence="1">Magnesium ions are required for integrase activity. Binds at least 1, maybe 2 magnesium ions.</text>
</comment>
<comment type="activity regulation">
    <text evidence="1">Protease: The viral protease is inhibited by many synthetic protease inhibitors (PIs), such as amprenavir, atazanavir, indinavir, loprinavir, nelfinavir, ritonavir and saquinavir. Use of protease inhibitors in tritherapy regimens permit more ambitious therapeutic strategies. Reverse transcriptase/ribonuclease H: RT can be inhibited either by nucleoside RT inhibitors (NRTIs) or by non nucleoside RT inhibitors (NNRTIs). NRTIs act as chain terminators, whereas NNRTIs inhibit DNA polymerization by binding a small hydrophobic pocket near the RT active site and inducing an allosteric change in this region. Classical NRTIs are abacavir, adefovir (PMEA), didanosine (ddI), lamivudine (3TC), stavudine (d4T), tenofovir (PMPA), zalcitabine (ddC), and zidovudine (AZT). Classical NNRTIs are atevirdine (BHAP U-87201E), delavirdine, efavirenz (DMP-266), emivirine (I-EBU), and nevirapine (BI-RG-587). The tritherapies used as a basic effective treatment of AIDS associate two NRTIs and one NNRTI.</text>
</comment>
<comment type="subunit">
    <molecule>Matrix protein p17</molecule>
    <text evidence="5 7">Homotrimer; further assembles as hexamers of trimers (By similarity). Interacts with gp41 (via C-terminus) (By similarity). Interacts with host CALM1; this interaction induces a conformational change in the Matrix protein, triggering exposure of the myristate group (By similarity). Interacts with host AP3D1; this interaction allows the polyprotein trafficking to multivesicular bodies during virus assembly (By similarity). Part of the pre-integration complex (PIC) which is composed of viral genome, matrix protein, Vpr and integrase (By similarity).</text>
</comment>
<comment type="subunit">
    <molecule>Capsid protein p24</molecule>
    <text evidence="5 7">Homodimer; the homodimer further multimerizes as homohexamers or homopentamers. Interacts with human PPIA/CYPA (By similarity); This interaction stabilizes the capsid. Interacts with human NUP153 (By similarity). Interacts with host PDZD8; this interaction stabilizes the capsid (By similarity). Interacts with monkey TRIM5; this interaction destabilizes the capsid (By similarity).</text>
</comment>
<comment type="subunit">
    <molecule>Protease</molecule>
    <text evidence="5 7">Homodimer, whose active site consists of two apposed aspartic acid residues.</text>
</comment>
<comment type="subunit">
    <molecule>Reverse transcriptase/ribonuclease H</molecule>
    <text evidence="3">Heterodimer of p66 RT and p51 RT (RT p66/p51) (By similarity). Heterodimerization of RT is essential for DNA polymerase activity (By similarity). The overall folding of the subdomains is similar in p66 RT and p51 RT but the spatial arrangements of the subdomains are dramatically different (By similarity).</text>
</comment>
<comment type="subunit">
    <molecule>Integrase</molecule>
    <text evidence="4 5 7">Homotetramer; may further associate as a homohexadecamer (By similarity). Part of the pre-integration complex (PIC) which is composed of viral genome, matrix protein, Vpr and integrase. Interacts with human SMARCB1/INI1 and human PSIP1/LEDGF isoform 1. Interacts with human KPNA3; this interaction might play a role in nuclear import of the pre-integration complex (By similarity). Interacts with human NUP153; this interaction might play a role in nuclear import of the pre-integration complex (By similarity).</text>
</comment>
<comment type="subcellular location">
    <molecule>Gag-Pol polyprotein</molecule>
    <subcellularLocation>
        <location>Host cell membrane</location>
        <topology>Lipid-anchor</topology>
    </subcellularLocation>
    <subcellularLocation>
        <location>Host endosome</location>
        <location>Host multivesicular body</location>
    </subcellularLocation>
    <text evidence="7">These locations are linked to virus assembly sites. The main location is the cell membrane, but under some circumstances, late endosomal compartments can serve as productive sites for virion assembly.</text>
</comment>
<comment type="subcellular location">
    <molecule>Matrix protein p17</molecule>
    <subcellularLocation>
        <location>Virion membrane</location>
        <topology evidence="18">Lipid-anchor</topology>
    </subcellularLocation>
    <subcellularLocation>
        <location evidence="1">Host nucleus</location>
    </subcellularLocation>
    <subcellularLocation>
        <location evidence="1">Host cytoplasm</location>
    </subcellularLocation>
</comment>
<comment type="subcellular location">
    <molecule>Capsid protein p24</molecule>
    <subcellularLocation>
        <location evidence="18">Virion</location>
    </subcellularLocation>
</comment>
<comment type="subcellular location">
    <molecule>Nucleocapsid protein p7</molecule>
    <subcellularLocation>
        <location evidence="18">Virion</location>
    </subcellularLocation>
</comment>
<comment type="subcellular location">
    <molecule>Reverse transcriptase/ribonuclease H</molecule>
    <subcellularLocation>
        <location evidence="18">Virion</location>
    </subcellularLocation>
</comment>
<comment type="subcellular location">
    <molecule>Integrase</molecule>
    <subcellularLocation>
        <location evidence="18">Virion</location>
    </subcellularLocation>
    <subcellularLocation>
        <location evidence="18">Host nucleus</location>
    </subcellularLocation>
    <subcellularLocation>
        <location evidence="18">Host cytoplasm</location>
    </subcellularLocation>
    <text evidence="18">Nuclear at initial phase, cytoplasmic at assembly.</text>
</comment>
<comment type="alternative products">
    <event type="ribosomal frameshifting"/>
    <isoform>
        <id>P12499-1</id>
        <name>Gag-Pol polyprotein</name>
        <sequence type="displayed"/>
    </isoform>
    <isoform>
        <id>P12495-1</id>
        <name>Gag polyprotein</name>
        <sequence type="external"/>
    </isoform>
    <text>Translation results in the formation of the Gag polyprotein most of the time. Ribosomal frameshifting at the gag-pol genes boundary occurs at low frequency and produces the Gag-Pol polyprotein. This strategy of translation probably allows the virus to modulate the quantity of each viral protein. Maintenance of a correct Gag to Gag-Pol ratio is essential for RNA dimerization and viral infectivity.</text>
</comment>
<comment type="domain">
    <molecule>Reverse transcriptase/ribonuclease H</molecule>
    <text evidence="1">RT is structured in five subdomains: finger, palm, thumb, connection and RNase H. Within the palm subdomain, the 'primer grip' region is thought to be involved in the positioning of the primer terminus for accommodating the incoming nucleotide. The RNase H domain stabilizes the association of RT with primer-template.</text>
</comment>
<comment type="domain">
    <molecule>Reverse transcriptase/ribonuclease H</molecule>
    <text evidence="1">The tryptophan repeat motif is involved in RT p66/p51 dimerization (By similarity).</text>
</comment>
<comment type="domain">
    <molecule>Integrase</molecule>
    <text evidence="1">The core domain contains the D-x(n)-D-x(35)-E motif, named for the phylogenetically conserved glutamic acid and aspartic acid residues and the invariant 35 amino acid spacing between the second and third acidic residues. Each acidic residue of the D,D(35)E motif is independently essential for the 3'-processing and strand transfer activities of purified integrase protein.</text>
</comment>
<comment type="PTM">
    <molecule>Gag-Pol polyprotein</molecule>
    <text evidence="5 11">Specific enzymatic cleavages by the viral protease yield mature proteins. The protease is released by autocatalytic cleavage. The polyprotein is cleaved during and after budding, this process is termed maturation. Proteolytic cleavage of p66 RT removes the RNase H domain to yield the p51 RT subunit. Nucleocapsid protein p7 might be further cleaved after virus entry.</text>
</comment>
<comment type="PTM">
    <molecule>Matrix protein p17</molecule>
    <text evidence="5">Tyrosine phosphorylated presumably in the virion by a host kinase. Phosphorylation is apparently not a major regulator of membrane association.</text>
</comment>
<comment type="PTM">
    <molecule>Capsid protein p24</molecule>
    <text evidence="6">Phosphorylated possibly by host MAPK1; this phosphorylation is necessary for Pin1-mediated virion uncoating.</text>
</comment>
<comment type="PTM">
    <molecule>Nucleocapsid protein p7</molecule>
    <text evidence="2">Methylated by host PRMT6, impairing its function by reducing RNA annealing and the initiation of reverse transcription.</text>
</comment>
<comment type="miscellaneous">
    <molecule>Reverse transcriptase/ribonuclease H</molecule>
    <text evidence="1">Error-prone enzyme that lacks a proof-reading function. High mutations rate is a direct consequence of this characteristic. RT also displays frequent template switching leading to high recombination rate. Recombination mostly occurs between homologous regions of the two copackaged RNA genomes. If these two RNA molecules derive from different viral strains, reverse transcription will give rise to highly recombinated proviral DNAs.</text>
</comment>
<comment type="miscellaneous">
    <text>HIV-1 lineages are divided in three main groups, M (for Major), O (for Outlier), and N (for New, or Non-M, Non-O). The vast majority of strains found worldwide belong to the group M. Group O seems to be endemic to and largely confined to Cameroon and neighboring countries in West Central Africa, where these viruses represent a small minority of HIV-1 strains. The group N is represented by a limited number of isolates from Cameroonian persons. The group M is further subdivided in 9 clades or subtypes (A to D, F to H, J and K).</text>
</comment>
<comment type="miscellaneous">
    <text>Resistance to inhibitors associated with mutations are observed both in viral protease and in reverse transcriptase. Most of the time, single mutations confer only a modest reduction in drug susceptibility. Combination of several mutations is usually required to develop a high-level drug resistance. These mutations are predominantly found in clade B viruses and not in other genotypes. They are listed in the clade B representative isolate HXB2 (AC P04585).</text>
</comment>
<comment type="miscellaneous">
    <molecule>Isoform Gag-Pol polyprotein</molecule>
    <text>Produced by -1 ribosomal frameshifting.</text>
</comment>
<comment type="online information" name="HIV drug resistance mutations">
    <link uri="https://www.iasusa.org/hiv-drug-resistance/hiv-drug-resistance-mutations/"/>
</comment>
<comment type="online information" name="hivdb">
    <link uri="https://hivdb.stanford.edu"/>
    <text>HIV drug resistance database</text>
</comment>
<accession>P12499</accession>
<reference key="1">
    <citation type="submission" date="1989-07" db="EMBL/GenBank/DDBJ databases">
        <authorList>
            <person name="Theodore T."/>
            <person name="Buckler-White A.J."/>
        </authorList>
    </citation>
    <scope>NUCLEOTIDE SEQUENCE [GENOMIC RNA]</scope>
</reference>
<reference key="2">
    <citation type="journal article" date="1996" name="Curr. Top. Microbiol. Immunol.">
        <title>Proteolytic processing and particle maturation.</title>
        <authorList>
            <person name="Vogt V.M."/>
        </authorList>
    </citation>
    <scope>REVIEW</scope>
</reference>
<reference key="3">
    <citation type="journal article" date="1999" name="J. Mol. Biol.">
        <title>Structural biology of HIV.</title>
        <authorList>
            <person name="Turner B.G."/>
            <person name="Summers M.F."/>
        </authorList>
    </citation>
    <scope>REVIEW</scope>
</reference>
<reference key="4">
    <citation type="journal article" date="2001" name="Annu. Rev. Genet.">
        <title>Mechanisms of retroviral recombination.</title>
        <authorList>
            <person name="Negroni M."/>
            <person name="Buc H."/>
        </authorList>
    </citation>
    <scope>REVIEW</scope>
</reference>
<reference key="5">
    <citation type="journal article" date="2002" name="Genome Biol.">
        <title>Retroviral proteases.</title>
        <authorList>
            <person name="Dunn B.M."/>
            <person name="Goodenow M.M."/>
            <person name="Gustchina A."/>
            <person name="Wlodawer A."/>
        </authorList>
    </citation>
    <scope>REVIEW</scope>
</reference>
<reference key="6">
    <citation type="journal article" date="2003" name="Biochim. Biophys. Acta">
        <title>Role of HIV-1 Gag domains in viral assembly.</title>
        <authorList>
            <person name="Scarlata S."/>
            <person name="Carter C."/>
        </authorList>
    </citation>
    <scope>REVIEW</scope>
</reference>
<reference key="7">
    <citation type="journal article" date="1995" name="Proc. Natl. Acad. Sci. U.S.A.">
        <title>ABT-538 is a potent inhibitor of human immunodeficiency virus protease and has high oral bioavailability in humans.</title>
        <authorList>
            <person name="Kempf D.J."/>
            <person name="Marsh K.C."/>
            <person name="Denissen J.F."/>
            <person name="McDonald E."/>
            <person name="Vasavanonda S."/>
            <person name="Flentge C.A."/>
            <person name="Green B.E."/>
            <person name="Fino L."/>
            <person name="Park C.H."/>
            <person name="Kong X.-P."/>
            <person name="Wideburg N.E."/>
            <person name="Saldivar A."/>
            <person name="Ruiz L."/>
            <person name="Kati W.M."/>
            <person name="Sham H.L."/>
            <person name="Robins T."/>
            <person name="Stewart K.D."/>
            <person name="Hsu A."/>
            <person name="Plattner J.J."/>
            <person name="Leonard J.M."/>
            <person name="Norbeck D.W."/>
        </authorList>
    </citation>
    <scope>X-RAY CRYSTALLOGRAPHY (1.8 ANGSTROMS) OF 490-588 IN COMPLEX WITH THE INHIBITOR A-84539</scope>
</reference>
<reference key="8">
    <citation type="journal article" date="1996" name="J. Med. Chem.">
        <title>A novel, picomolar inhibitor of human immunodeficiency virus type 1 protease.</title>
        <authorList>
            <person name="Sham H.L."/>
            <person name="Zhao C."/>
            <person name="Stewart K.D."/>
            <person name="Betebenner D.A."/>
            <person name="Lin S."/>
            <person name="Park C.H."/>
            <person name="Kong X.-P."/>
            <person name="Rosenbrook W. Jr."/>
            <person name="Herrin T."/>
            <person name="Madigan D."/>
            <person name="Vasavanonda S."/>
            <person name="Lyons N."/>
            <person name="Molla A."/>
            <person name="Saldivar A."/>
            <person name="Marsh K.C."/>
            <person name="McDonald E."/>
            <person name="Wideburg N.E."/>
            <person name="Denissen J.F."/>
            <person name="Robins T."/>
            <person name="Kempf D.J."/>
            <person name="Plattner J.J."/>
            <person name="Norbeck D.W."/>
        </authorList>
    </citation>
    <scope>X-RAY CRYSTALLOGRAPHY (1.8 ANGSTROMS) OF 490-588</scope>
</reference>
<keyword id="KW-0002">3D-structure</keyword>
<keyword id="KW-1073">Activation of host caspases by virus</keyword>
<keyword id="KW-0014">AIDS</keyword>
<keyword id="KW-0064">Aspartyl protease</keyword>
<keyword id="KW-0167">Capsid protein</keyword>
<keyword id="KW-0229">DNA integration</keyword>
<keyword id="KW-0233">DNA recombination</keyword>
<keyword id="KW-0238">DNA-binding</keyword>
<keyword id="KW-0239">DNA-directed DNA polymerase</keyword>
<keyword id="KW-0255">Endonuclease</keyword>
<keyword id="KW-1262">Eukaryotic host gene expression shutoff by virus</keyword>
<keyword id="KW-1193">Eukaryotic host translation shutoff by virus</keyword>
<keyword id="KW-1032">Host cell membrane</keyword>
<keyword id="KW-1035">Host cytoplasm</keyword>
<keyword id="KW-1039">Host endosome</keyword>
<keyword id="KW-1190">Host gene expression shutoff by virus</keyword>
<keyword id="KW-1043">Host membrane</keyword>
<keyword id="KW-1048">Host nucleus</keyword>
<keyword id="KW-0945">Host-virus interaction</keyword>
<keyword id="KW-0378">Hydrolase</keyword>
<keyword id="KW-0446">Lipid-binding</keyword>
<keyword id="KW-0449">Lipoprotein</keyword>
<keyword id="KW-0460">Magnesium</keyword>
<keyword id="KW-0472">Membrane</keyword>
<keyword id="KW-0479">Metal-binding</keyword>
<keyword id="KW-1119">Modulation of host cell apoptosis by virus</keyword>
<keyword id="KW-0511">Multifunctional enzyme</keyword>
<keyword id="KW-0519">Myristate</keyword>
<keyword id="KW-0540">Nuclease</keyword>
<keyword id="KW-0548">Nucleotidyltransferase</keyword>
<keyword id="KW-0597">Phosphoprotein</keyword>
<keyword id="KW-0645">Protease</keyword>
<keyword id="KW-0677">Repeat</keyword>
<keyword id="KW-0688">Ribosomal frameshifting</keyword>
<keyword id="KW-0694">RNA-binding</keyword>
<keyword id="KW-0695">RNA-directed DNA polymerase</keyword>
<keyword id="KW-0808">Transferase</keyword>
<keyword id="KW-1179">Viral genome integration</keyword>
<keyword id="KW-0543">Viral nucleoprotein</keyword>
<keyword id="KW-1163">Viral penetration into host nucleus</keyword>
<keyword id="KW-1188">Viral release from host cell</keyword>
<keyword id="KW-0946">Virion</keyword>
<keyword id="KW-0917">Virion maturation</keyword>
<keyword id="KW-1160">Virus entry into host cell</keyword>
<keyword id="KW-0862">Zinc</keyword>
<keyword id="KW-0863">Zinc-finger</keyword>
<name>POL_HV1Z2</name>
<organism>
    <name type="scientific">Human immunodeficiency virus type 1 group M subtype D (isolate Z2/CDC-Z34)</name>
    <name type="common">HIV-1</name>
    <dbReference type="NCBI Taxonomy" id="11683"/>
    <lineage>
        <taxon>Viruses</taxon>
        <taxon>Riboviria</taxon>
        <taxon>Pararnavirae</taxon>
        <taxon>Artverviricota</taxon>
        <taxon>Revtraviricetes</taxon>
        <taxon>Ortervirales</taxon>
        <taxon>Retroviridae</taxon>
        <taxon>Orthoretrovirinae</taxon>
        <taxon>Lentivirus</taxon>
        <taxon>Human immunodeficiency virus type 1</taxon>
    </lineage>
</organism>
<gene>
    <name type="primary">gag-pol</name>
</gene>
<protein>
    <recommendedName>
        <fullName>Gag-Pol polyprotein</fullName>
    </recommendedName>
    <alternativeName>
        <fullName>Pr160Gag-Pol</fullName>
    </alternativeName>
    <component>
        <recommendedName>
            <fullName>Matrix protein p17</fullName>
            <shortName>MA</shortName>
        </recommendedName>
    </component>
    <component>
        <recommendedName>
            <fullName>Capsid protein p24</fullName>
            <shortName>CA</shortName>
        </recommendedName>
    </component>
    <component>
        <recommendedName>
            <fullName evidence="7">Spacer peptide 1</fullName>
            <shortName>SP1</shortName>
        </recommendedName>
        <alternativeName>
            <fullName>p2</fullName>
        </alternativeName>
    </component>
    <component>
        <recommendedName>
            <fullName>Nucleocapsid protein p7</fullName>
            <shortName>NC</shortName>
        </recommendedName>
    </component>
    <component>
        <recommendedName>
            <fullName>Transframe peptide</fullName>
            <shortName>TF</shortName>
        </recommendedName>
    </component>
    <component>
        <recommendedName>
            <fullName>p6-pol</fullName>
            <shortName>p6*</shortName>
        </recommendedName>
    </component>
    <component>
        <recommendedName>
            <fullName>Protease</fullName>
            <ecNumber>3.4.23.16</ecNumber>
        </recommendedName>
        <alternativeName>
            <fullName>PR</fullName>
        </alternativeName>
        <alternativeName>
            <fullName>Retropepsin</fullName>
        </alternativeName>
    </component>
    <component>
        <recommendedName>
            <fullName>Reverse transcriptase/ribonuclease H</fullName>
            <ecNumber>2.7.7.49</ecNumber>
            <ecNumber>2.7.7.7</ecNumber>
            <ecNumber>3.1.26.13</ecNumber>
        </recommendedName>
        <alternativeName>
            <fullName>Exoribonuclease H</fullName>
            <ecNumber>3.1.13.2</ecNumber>
        </alternativeName>
        <alternativeName>
            <fullName>p66 RT</fullName>
        </alternativeName>
    </component>
    <component>
        <recommendedName>
            <fullName>p51 RT</fullName>
        </recommendedName>
    </component>
    <component>
        <recommendedName>
            <fullName>p15</fullName>
        </recommendedName>
    </component>
    <component>
        <recommendedName>
            <fullName>Integrase</fullName>
            <shortName>IN</shortName>
            <ecNumber evidence="5">2.7.7.-</ecNumber>
            <ecNumber evidence="5">3.1.-.-</ecNumber>
        </recommendedName>
    </component>
</protein>